<sequence>MVDILPHPSFLGDMGDHSKKKSGIAMCVGCGSQIHDQYILRVSPDLEWHAACLKCAECSQYLDETCTCFVRDGKTYCKRDYVRLFGIKCAKCNIGFCSSDLVMRARDNVYHMECFRCSVCSRHLLPGDEFSLRDEELLCRADHGLLMERASAGSPISPGNIHSSRPLHIPEPVPVRQPPHRNHVHKQSEKTTRVRTVLNEKQLHTLRTCYNANPRPDALMKEQLVEMTGLSPRVIRVWFQNKRCKDKKKSILMKQLQQQQHNDKTNLQGLTGTPLVAGSPIRHDTTVQGNPVEVQTYQPPWKALSEFALQSDLDQPAFQQLVSFSESGSLGNSSGSDVTSLSSQLPDTPNSMVPSPVET</sequence>
<keyword id="KW-0217">Developmental protein</keyword>
<keyword id="KW-0238">DNA-binding</keyword>
<keyword id="KW-0371">Homeobox</keyword>
<keyword id="KW-0440">LIM domain</keyword>
<keyword id="KW-0479">Metal-binding</keyword>
<keyword id="KW-0539">Nucleus</keyword>
<keyword id="KW-1185">Reference proteome</keyword>
<keyword id="KW-0677">Repeat</keyword>
<keyword id="KW-0862">Zinc</keyword>
<evidence type="ECO:0000255" key="1">
    <source>
        <dbReference type="PROSITE-ProRule" id="PRU00108"/>
    </source>
</evidence>
<evidence type="ECO:0000255" key="2">
    <source>
        <dbReference type="PROSITE-ProRule" id="PRU00125"/>
    </source>
</evidence>
<evidence type="ECO:0000256" key="3">
    <source>
        <dbReference type="SAM" id="MobiDB-lite"/>
    </source>
</evidence>
<evidence type="ECO:0000269" key="4">
    <source>
    </source>
</evidence>
<accession>P53406</accession>
<feature type="chain" id="PRO_0000075756" description="Insulin gene enhancer protein isl-2a">
    <location>
        <begin position="1"/>
        <end position="359"/>
    </location>
</feature>
<feature type="domain" description="LIM zinc-binding 1" evidence="2">
    <location>
        <begin position="27"/>
        <end position="80"/>
    </location>
</feature>
<feature type="domain" description="LIM zinc-binding 2" evidence="2">
    <location>
        <begin position="30"/>
        <end position="143"/>
    </location>
</feature>
<feature type="DNA-binding region" description="Homeobox" evidence="1">
    <location>
        <begin position="191"/>
        <end position="250"/>
    </location>
</feature>
<feature type="region of interest" description="Disordered" evidence="3">
    <location>
        <begin position="171"/>
        <end position="190"/>
    </location>
</feature>
<feature type="region of interest" description="Disordered" evidence="3">
    <location>
        <begin position="326"/>
        <end position="359"/>
    </location>
</feature>
<feature type="compositionally biased region" description="Low complexity" evidence="3">
    <location>
        <begin position="326"/>
        <end position="336"/>
    </location>
</feature>
<feature type="compositionally biased region" description="Polar residues" evidence="3">
    <location>
        <begin position="337"/>
        <end position="359"/>
    </location>
</feature>
<organism>
    <name type="scientific">Danio rerio</name>
    <name type="common">Zebrafish</name>
    <name type="synonym">Brachydanio rerio</name>
    <dbReference type="NCBI Taxonomy" id="7955"/>
    <lineage>
        <taxon>Eukaryota</taxon>
        <taxon>Metazoa</taxon>
        <taxon>Chordata</taxon>
        <taxon>Craniata</taxon>
        <taxon>Vertebrata</taxon>
        <taxon>Euteleostomi</taxon>
        <taxon>Actinopterygii</taxon>
        <taxon>Neopterygii</taxon>
        <taxon>Teleostei</taxon>
        <taxon>Ostariophysi</taxon>
        <taxon>Cypriniformes</taxon>
        <taxon>Danionidae</taxon>
        <taxon>Danioninae</taxon>
        <taxon>Danio</taxon>
    </lineage>
</organism>
<dbReference type="EMBL" id="D38453">
    <property type="protein sequence ID" value="BAA07484.1"/>
    <property type="molecule type" value="mRNA"/>
</dbReference>
<dbReference type="EMBL" id="X88805">
    <property type="protein sequence ID" value="CAA61283.1"/>
    <property type="molecule type" value="mRNA"/>
</dbReference>
<dbReference type="EMBL" id="U09403">
    <property type="protein sequence ID" value="AAA80274.1"/>
    <property type="molecule type" value="mRNA"/>
</dbReference>
<dbReference type="PIR" id="I51734">
    <property type="entry name" value="I51734"/>
</dbReference>
<dbReference type="RefSeq" id="NP_571045.1">
    <property type="nucleotide sequence ID" value="NM_130970.1"/>
</dbReference>
<dbReference type="SMR" id="P53406"/>
<dbReference type="FunCoup" id="P53406">
    <property type="interactions" value="357"/>
</dbReference>
<dbReference type="STRING" id="7955.ENSDARP00000020636"/>
<dbReference type="PaxDb" id="7955-ENSDARP00000020636"/>
<dbReference type="Ensembl" id="ENSDART00000012862">
    <property type="protein sequence ID" value="ENSDARP00000020636"/>
    <property type="gene ID" value="ENSDARG00000003971"/>
</dbReference>
<dbReference type="GeneID" id="30157"/>
<dbReference type="KEGG" id="dre:30157"/>
<dbReference type="AGR" id="ZFIN:ZDB-GENE-980526-562"/>
<dbReference type="CTD" id="30157"/>
<dbReference type="ZFIN" id="ZDB-GENE-980526-562">
    <property type="gene designation" value="isl2a"/>
</dbReference>
<dbReference type="eggNOG" id="KOG0490">
    <property type="taxonomic scope" value="Eukaryota"/>
</dbReference>
<dbReference type="HOGENOM" id="CLU_027802_2_0_1"/>
<dbReference type="InParanoid" id="P53406"/>
<dbReference type="OMA" id="AMHPNEV"/>
<dbReference type="OrthoDB" id="125004at2759"/>
<dbReference type="PhylomeDB" id="P53406"/>
<dbReference type="TreeFam" id="TF315442"/>
<dbReference type="PRO" id="PR:P53406"/>
<dbReference type="Proteomes" id="UP000000437">
    <property type="component" value="Chromosome 25"/>
</dbReference>
<dbReference type="Bgee" id="ENSDARG00000003971">
    <property type="expression patterns" value="Expressed in neuron and 48 other cell types or tissues"/>
</dbReference>
<dbReference type="ExpressionAtlas" id="P53406">
    <property type="expression patterns" value="baseline and differential"/>
</dbReference>
<dbReference type="GO" id="GO:0005634">
    <property type="term" value="C:nucleus"/>
    <property type="evidence" value="ECO:0000318"/>
    <property type="project" value="GO_Central"/>
</dbReference>
<dbReference type="GO" id="GO:0000987">
    <property type="term" value="F:cis-regulatory region sequence-specific DNA binding"/>
    <property type="evidence" value="ECO:0000318"/>
    <property type="project" value="GO_Central"/>
</dbReference>
<dbReference type="GO" id="GO:0000981">
    <property type="term" value="F:DNA-binding transcription factor activity, RNA polymerase II-specific"/>
    <property type="evidence" value="ECO:0000318"/>
    <property type="project" value="GO_Central"/>
</dbReference>
<dbReference type="GO" id="GO:0046872">
    <property type="term" value="F:metal ion binding"/>
    <property type="evidence" value="ECO:0007669"/>
    <property type="project" value="UniProtKB-KW"/>
</dbReference>
<dbReference type="GO" id="GO:0035476">
    <property type="term" value="P:angioblast cell migration"/>
    <property type="evidence" value="ECO:0000315"/>
    <property type="project" value="ZFIN"/>
</dbReference>
<dbReference type="GO" id="GO:0048675">
    <property type="term" value="P:axon extension"/>
    <property type="evidence" value="ECO:0000315"/>
    <property type="project" value="ZFIN"/>
</dbReference>
<dbReference type="GO" id="GO:0007411">
    <property type="term" value="P:axon guidance"/>
    <property type="evidence" value="ECO:0000315"/>
    <property type="project" value="ZFIN"/>
</dbReference>
<dbReference type="GO" id="GO:0007409">
    <property type="term" value="P:axonogenesis"/>
    <property type="evidence" value="ECO:0000315"/>
    <property type="project" value="ZFIN"/>
</dbReference>
<dbReference type="GO" id="GO:0031017">
    <property type="term" value="P:exocrine pancreas development"/>
    <property type="evidence" value="ECO:0000316"/>
    <property type="project" value="ZFIN"/>
</dbReference>
<dbReference type="GO" id="GO:0048665">
    <property type="term" value="P:neuron fate specification"/>
    <property type="evidence" value="ECO:0000315"/>
    <property type="project" value="ZFIN"/>
</dbReference>
<dbReference type="GO" id="GO:0045944">
    <property type="term" value="P:positive regulation of transcription by RNA polymerase II"/>
    <property type="evidence" value="ECO:0000318"/>
    <property type="project" value="GO_Central"/>
</dbReference>
<dbReference type="GO" id="GO:0048845">
    <property type="term" value="P:venous blood vessel morphogenesis"/>
    <property type="evidence" value="ECO:0000315"/>
    <property type="project" value="ZFIN"/>
</dbReference>
<dbReference type="CDD" id="cd00086">
    <property type="entry name" value="homeodomain"/>
    <property type="match status" value="1"/>
</dbReference>
<dbReference type="CDD" id="cd09366">
    <property type="entry name" value="LIM1_Isl"/>
    <property type="match status" value="1"/>
</dbReference>
<dbReference type="CDD" id="cd09374">
    <property type="entry name" value="LIM2_Isl"/>
    <property type="match status" value="1"/>
</dbReference>
<dbReference type="FunFam" id="2.10.110.10:FF:000034">
    <property type="entry name" value="Insulin gene enhancer protein ISL"/>
    <property type="match status" value="1"/>
</dbReference>
<dbReference type="FunFam" id="1.10.10.60:FF:000041">
    <property type="entry name" value="insulin gene enhancer protein ISL-1"/>
    <property type="match status" value="1"/>
</dbReference>
<dbReference type="FunFam" id="2.10.110.10:FF:000068">
    <property type="entry name" value="Insulin gene enhancer protein ISL-2"/>
    <property type="match status" value="1"/>
</dbReference>
<dbReference type="Gene3D" id="2.10.110.10">
    <property type="entry name" value="Cysteine Rich Protein"/>
    <property type="match status" value="2"/>
</dbReference>
<dbReference type="Gene3D" id="1.10.10.60">
    <property type="entry name" value="Homeodomain-like"/>
    <property type="match status" value="1"/>
</dbReference>
<dbReference type="InterPro" id="IPR001356">
    <property type="entry name" value="HD"/>
</dbReference>
<dbReference type="InterPro" id="IPR017970">
    <property type="entry name" value="Homeobox_CS"/>
</dbReference>
<dbReference type="InterPro" id="IPR009057">
    <property type="entry name" value="Homeodomain-like_sf"/>
</dbReference>
<dbReference type="InterPro" id="IPR047169">
    <property type="entry name" value="ISL1/2-like"/>
</dbReference>
<dbReference type="InterPro" id="IPR047244">
    <property type="entry name" value="ISL1/2-like_LIM1"/>
</dbReference>
<dbReference type="InterPro" id="IPR001781">
    <property type="entry name" value="Znf_LIM"/>
</dbReference>
<dbReference type="PANTHER" id="PTHR24204">
    <property type="entry name" value="INSULIN GENE ENHANCER PROTEIN"/>
    <property type="match status" value="1"/>
</dbReference>
<dbReference type="PANTHER" id="PTHR24204:SF2">
    <property type="entry name" value="INSULIN GENE ENHANCER PROTEIN ISL-2"/>
    <property type="match status" value="1"/>
</dbReference>
<dbReference type="Pfam" id="PF00046">
    <property type="entry name" value="Homeodomain"/>
    <property type="match status" value="1"/>
</dbReference>
<dbReference type="Pfam" id="PF00412">
    <property type="entry name" value="LIM"/>
    <property type="match status" value="2"/>
</dbReference>
<dbReference type="SMART" id="SM00389">
    <property type="entry name" value="HOX"/>
    <property type="match status" value="1"/>
</dbReference>
<dbReference type="SMART" id="SM00132">
    <property type="entry name" value="LIM"/>
    <property type="match status" value="2"/>
</dbReference>
<dbReference type="SUPFAM" id="SSF57716">
    <property type="entry name" value="Glucocorticoid receptor-like (DNA-binding domain)"/>
    <property type="match status" value="2"/>
</dbReference>
<dbReference type="SUPFAM" id="SSF46689">
    <property type="entry name" value="Homeodomain-like"/>
    <property type="match status" value="1"/>
</dbReference>
<dbReference type="PROSITE" id="PS00027">
    <property type="entry name" value="HOMEOBOX_1"/>
    <property type="match status" value="1"/>
</dbReference>
<dbReference type="PROSITE" id="PS50071">
    <property type="entry name" value="HOMEOBOX_2"/>
    <property type="match status" value="1"/>
</dbReference>
<dbReference type="PROSITE" id="PS00478">
    <property type="entry name" value="LIM_DOMAIN_1"/>
    <property type="match status" value="2"/>
</dbReference>
<dbReference type="PROSITE" id="PS50023">
    <property type="entry name" value="LIM_DOMAIN_2"/>
    <property type="match status" value="2"/>
</dbReference>
<protein>
    <recommendedName>
        <fullName>Insulin gene enhancer protein isl-2a</fullName>
        <shortName>Islet-2A</shortName>
    </recommendedName>
    <alternativeName>
        <fullName>Insulin gene enhancer protein isl-2</fullName>
        <shortName>Islet-2</shortName>
    </alternativeName>
</protein>
<proteinExistence type="evidence at transcript level"/>
<name>ISL2A_DANRE</name>
<reference key="1">
    <citation type="journal article" date="1995" name="Dev. Biol.">
        <title>Molecular heterogeneity among primary motoneurons and within myotomes revealed by the differential mRNA expression of novel islet-1 homologs in embryonic zebrafish.</title>
        <authorList>
            <person name="Tokumoto M."/>
            <person name="Gong Z."/>
            <person name="Tsubokawa T."/>
            <person name="Hew C.-L."/>
            <person name="Uyemura K."/>
            <person name="Hotta Y."/>
            <person name="Okamoto H."/>
        </authorList>
    </citation>
    <scope>NUCLEOTIDE SEQUENCE [MRNA]</scope>
    <scope>DEVELOPMENTAL STAGE</scope>
    <source>
        <tissue>Embryo</tissue>
    </source>
</reference>
<reference key="2">
    <citation type="journal article" date="1995" name="Development">
        <title>Motoneuron fate specification revealed by patterned LIM homeobox gene expression in embryonic zebrafish.</title>
        <authorList>
            <person name="Appel B."/>
            <person name="Korzh V."/>
            <person name="Glasgow E."/>
            <person name="Thor S."/>
            <person name="Edlund T."/>
            <person name="Dawid I.B."/>
            <person name="Eisen J.S."/>
        </authorList>
    </citation>
    <scope>NUCLEOTIDE SEQUENCE [MRNA]</scope>
</reference>
<reference key="3">
    <citation type="journal article" date="1995" name="J. Biol. Chem.">
        <title>Presence of isl-1-related LIM domain homeobox genes in teleost and their similar patterns of expression in brain and spinal cord.</title>
        <authorList>
            <person name="Gong Z."/>
            <person name="Hui C.-C."/>
            <person name="Hew C.-L."/>
        </authorList>
    </citation>
    <scope>NUCLEOTIDE SEQUENCE [MRNA] OF 71-237</scope>
    <source>
        <tissue>Embryo</tissue>
    </source>
</reference>
<comment type="function">
    <text>Binds to one of the cis-acting domain of the insulin gene enhancer. May be involved in subtype specialization of primary motoneurons.</text>
</comment>
<comment type="subcellular location">
    <subcellularLocation>
        <location>Nucleus</location>
    </subcellularLocation>
</comment>
<comment type="developmental stage">
    <text evidence="4">First expressed at 15 hours post-fertilization (hpf), segmentally in the ventral region of the spinal cord (primary motoneurons) and then later in the dorsal regions (Rohan-Beard neurons). At 18 hpf, also expressed in tail bud and pronephric duct. At 24 hpf, expressed strongly in trigeminal ganglia. At 30 hpf, expressed transiently in pectoral fin bud.</text>
</comment>
<gene>
    <name type="primary">isl2a</name>
    <name type="synonym">isl-2</name>
    <name type="synonym">isl2</name>
</gene>